<feature type="chain" id="PRO_0000184082" description="Flagellar motor switch protein FliG">
    <location>
        <begin position="1"/>
        <end position="338"/>
    </location>
</feature>
<feature type="short sequence motif" description="Part of the EHPQR-motif">
    <location>
        <begin position="129"/>
        <end position="132"/>
    </location>
</feature>
<feature type="site" description="Part of the EHPQR-motif">
    <location>
        <position position="164"/>
    </location>
</feature>
<keyword id="KW-0975">Bacterial flagellum</keyword>
<keyword id="KW-1003">Cell membrane</keyword>
<keyword id="KW-0145">Chemotaxis</keyword>
<keyword id="KW-0283">Flagellar rotation</keyword>
<keyword id="KW-0472">Membrane</keyword>
<keyword id="KW-1185">Reference proteome</keyword>
<sequence>MARRDQDKLTGKQKAAILMISLGLDVSASVYKHLTDEEIERLTLEISGVRSVDHQKKDEIIEEFHNIAIAQDYISQGGLSYARQVLEKALGEDKAENILNRLTSSLQVKPFDFARKAEPEQILNFIQQEHPQTMALILSYLDPVQAGQILSELNPEVQAEVARRIAVMDRTSPEIINEVERILEQKLSSAFTQDYTQTGGIEAVVEVLNGVDRGTEKTILDSLEIQDPDLAEEIKKRMFVFEDIVTLDNRAIQRVIRDVENDDLLLSLKVASEEVKEIVFNNMSQRMVETFKEEMEFMGPVRLKDVEEAQSRIVSIVRKLEEAGEIVIARGGGDDIIV</sequence>
<organism>
    <name type="scientific">Bacillus subtilis (strain 168)</name>
    <dbReference type="NCBI Taxonomy" id="224308"/>
    <lineage>
        <taxon>Bacteria</taxon>
        <taxon>Bacillati</taxon>
        <taxon>Bacillota</taxon>
        <taxon>Bacilli</taxon>
        <taxon>Bacillales</taxon>
        <taxon>Bacillaceae</taxon>
        <taxon>Bacillus</taxon>
    </lineage>
</organism>
<comment type="function">
    <text>One of the proteins that forms a switch complex that is proposed to be located at the base of the basal body. This complex interacts with chemotaxis proteins (such as CheY) in addition to contacting components of the motor that determine the direction of flagellar rotation.</text>
</comment>
<comment type="subcellular location">
    <subcellularLocation>
        <location evidence="1">Cell membrane</location>
        <topology evidence="1">Peripheral membrane protein</topology>
        <orientation evidence="1">Cytoplasmic side</orientation>
    </subcellularLocation>
    <subcellularLocation>
        <location evidence="1">Bacterial flagellum basal body</location>
    </subcellularLocation>
</comment>
<comment type="similarity">
    <text evidence="2">Belongs to the FliG family.</text>
</comment>
<dbReference type="EMBL" id="X56049">
    <property type="protein sequence ID" value="CAA39521.1"/>
    <property type="molecule type" value="Genomic_DNA"/>
</dbReference>
<dbReference type="EMBL" id="AL009126">
    <property type="protein sequence ID" value="CAB13495.1"/>
    <property type="molecule type" value="Genomic_DNA"/>
</dbReference>
<dbReference type="PIR" id="B42365">
    <property type="entry name" value="B42365"/>
</dbReference>
<dbReference type="RefSeq" id="NP_389504.1">
    <property type="nucleotide sequence ID" value="NC_000964.3"/>
</dbReference>
<dbReference type="RefSeq" id="WP_003231981.1">
    <property type="nucleotide sequence ID" value="NZ_OZ025638.1"/>
</dbReference>
<dbReference type="SMR" id="P23448"/>
<dbReference type="FunCoup" id="P23448">
    <property type="interactions" value="141"/>
</dbReference>
<dbReference type="STRING" id="224308.BSU16220"/>
<dbReference type="jPOST" id="P23448"/>
<dbReference type="PaxDb" id="224308-BSU16220"/>
<dbReference type="EnsemblBacteria" id="CAB13495">
    <property type="protein sequence ID" value="CAB13495"/>
    <property type="gene ID" value="BSU_16220"/>
</dbReference>
<dbReference type="GeneID" id="76982400"/>
<dbReference type="GeneID" id="937577"/>
<dbReference type="KEGG" id="bsu:BSU16220"/>
<dbReference type="PATRIC" id="fig|224308.179.peg.1762"/>
<dbReference type="eggNOG" id="COG1536">
    <property type="taxonomic scope" value="Bacteria"/>
</dbReference>
<dbReference type="InParanoid" id="P23448"/>
<dbReference type="OrthoDB" id="9780302at2"/>
<dbReference type="PhylomeDB" id="P23448"/>
<dbReference type="BioCyc" id="BSUB:BSU16220-MONOMER"/>
<dbReference type="Proteomes" id="UP000001570">
    <property type="component" value="Chromosome"/>
</dbReference>
<dbReference type="GO" id="GO:0009425">
    <property type="term" value="C:bacterial-type flagellum basal body"/>
    <property type="evidence" value="ECO:0007669"/>
    <property type="project" value="UniProtKB-SubCell"/>
</dbReference>
<dbReference type="GO" id="GO:0005886">
    <property type="term" value="C:plasma membrane"/>
    <property type="evidence" value="ECO:0007669"/>
    <property type="project" value="UniProtKB-SubCell"/>
</dbReference>
<dbReference type="GO" id="GO:0003774">
    <property type="term" value="F:cytoskeletal motor activity"/>
    <property type="evidence" value="ECO:0007669"/>
    <property type="project" value="InterPro"/>
</dbReference>
<dbReference type="GO" id="GO:0044780">
    <property type="term" value="P:bacterial-type flagellum assembly"/>
    <property type="evidence" value="ECO:0000315"/>
    <property type="project" value="CACAO"/>
</dbReference>
<dbReference type="GO" id="GO:0071973">
    <property type="term" value="P:bacterial-type flagellum-dependent cell motility"/>
    <property type="evidence" value="ECO:0000318"/>
    <property type="project" value="GO_Central"/>
</dbReference>
<dbReference type="GO" id="GO:0071978">
    <property type="term" value="P:bacterial-type flagellum-dependent swarming motility"/>
    <property type="evidence" value="ECO:0000315"/>
    <property type="project" value="CACAO"/>
</dbReference>
<dbReference type="GO" id="GO:0006935">
    <property type="term" value="P:chemotaxis"/>
    <property type="evidence" value="ECO:0007669"/>
    <property type="project" value="UniProtKB-KW"/>
</dbReference>
<dbReference type="FunFam" id="1.10.220.30:FF:000001">
    <property type="entry name" value="Flagellar motor switch protein FliG"/>
    <property type="match status" value="1"/>
</dbReference>
<dbReference type="FunFam" id="1.10.220.30:FF:000005">
    <property type="entry name" value="Flagellar motor switch protein FliG"/>
    <property type="match status" value="1"/>
</dbReference>
<dbReference type="FunFam" id="1.10.220.30:FF:000006">
    <property type="entry name" value="Flagellar motor switch protein FliG"/>
    <property type="match status" value="1"/>
</dbReference>
<dbReference type="Gene3D" id="1.10.220.30">
    <property type="match status" value="3"/>
</dbReference>
<dbReference type="InterPro" id="IPR000090">
    <property type="entry name" value="Flg_Motor_Flig"/>
</dbReference>
<dbReference type="InterPro" id="IPR023087">
    <property type="entry name" value="Flg_Motor_Flig_C"/>
</dbReference>
<dbReference type="InterPro" id="IPR011002">
    <property type="entry name" value="FliG_a-hlx"/>
</dbReference>
<dbReference type="InterPro" id="IPR032779">
    <property type="entry name" value="FliG_M"/>
</dbReference>
<dbReference type="InterPro" id="IPR028263">
    <property type="entry name" value="FliG_N"/>
</dbReference>
<dbReference type="NCBIfam" id="TIGR00207">
    <property type="entry name" value="fliG"/>
    <property type="match status" value="1"/>
</dbReference>
<dbReference type="PANTHER" id="PTHR30534">
    <property type="entry name" value="FLAGELLAR MOTOR SWITCH PROTEIN FLIG"/>
    <property type="match status" value="1"/>
</dbReference>
<dbReference type="PANTHER" id="PTHR30534:SF0">
    <property type="entry name" value="FLAGELLAR MOTOR SWITCH PROTEIN FLIG"/>
    <property type="match status" value="1"/>
</dbReference>
<dbReference type="Pfam" id="PF01706">
    <property type="entry name" value="FliG_C"/>
    <property type="match status" value="1"/>
</dbReference>
<dbReference type="Pfam" id="PF14841">
    <property type="entry name" value="FliG_M"/>
    <property type="match status" value="1"/>
</dbReference>
<dbReference type="Pfam" id="PF14842">
    <property type="entry name" value="FliG_N"/>
    <property type="match status" value="1"/>
</dbReference>
<dbReference type="PIRSF" id="PIRSF003161">
    <property type="entry name" value="FliG"/>
    <property type="match status" value="1"/>
</dbReference>
<dbReference type="PRINTS" id="PR00954">
    <property type="entry name" value="FLGMOTORFLIG"/>
</dbReference>
<dbReference type="SUPFAM" id="SSF48029">
    <property type="entry name" value="FliG"/>
    <property type="match status" value="2"/>
</dbReference>
<accession>P23448</accession>
<gene>
    <name type="primary">fliG</name>
    <name type="ordered locus">BSU16220</name>
</gene>
<reference key="1">
    <citation type="journal article" date="1991" name="J. Bacteriol.">
        <title>The flaA locus of Bacillus subtilis is part of a large operon coding for flagellar structures, motility functions, and an ATPase-like polypeptide.</title>
        <authorList>
            <person name="Albertini A.M."/>
            <person name="Caramori T."/>
            <person name="Crabb W.D."/>
            <person name="Scoffone F."/>
            <person name="Galizzi A."/>
        </authorList>
    </citation>
    <scope>NUCLEOTIDE SEQUENCE [GENOMIC DNA]</scope>
    <source>
        <strain>168</strain>
    </source>
</reference>
<reference key="2">
    <citation type="journal article" date="1997" name="Nature">
        <title>The complete genome sequence of the Gram-positive bacterium Bacillus subtilis.</title>
        <authorList>
            <person name="Kunst F."/>
            <person name="Ogasawara N."/>
            <person name="Moszer I."/>
            <person name="Albertini A.M."/>
            <person name="Alloni G."/>
            <person name="Azevedo V."/>
            <person name="Bertero M.G."/>
            <person name="Bessieres P."/>
            <person name="Bolotin A."/>
            <person name="Borchert S."/>
            <person name="Borriss R."/>
            <person name="Boursier L."/>
            <person name="Brans A."/>
            <person name="Braun M."/>
            <person name="Brignell S.C."/>
            <person name="Bron S."/>
            <person name="Brouillet S."/>
            <person name="Bruschi C.V."/>
            <person name="Caldwell B."/>
            <person name="Capuano V."/>
            <person name="Carter N.M."/>
            <person name="Choi S.-K."/>
            <person name="Codani J.-J."/>
            <person name="Connerton I.F."/>
            <person name="Cummings N.J."/>
            <person name="Daniel R.A."/>
            <person name="Denizot F."/>
            <person name="Devine K.M."/>
            <person name="Duesterhoeft A."/>
            <person name="Ehrlich S.D."/>
            <person name="Emmerson P.T."/>
            <person name="Entian K.-D."/>
            <person name="Errington J."/>
            <person name="Fabret C."/>
            <person name="Ferrari E."/>
            <person name="Foulger D."/>
            <person name="Fritz C."/>
            <person name="Fujita M."/>
            <person name="Fujita Y."/>
            <person name="Fuma S."/>
            <person name="Galizzi A."/>
            <person name="Galleron N."/>
            <person name="Ghim S.-Y."/>
            <person name="Glaser P."/>
            <person name="Goffeau A."/>
            <person name="Golightly E.J."/>
            <person name="Grandi G."/>
            <person name="Guiseppi G."/>
            <person name="Guy B.J."/>
            <person name="Haga K."/>
            <person name="Haiech J."/>
            <person name="Harwood C.R."/>
            <person name="Henaut A."/>
            <person name="Hilbert H."/>
            <person name="Holsappel S."/>
            <person name="Hosono S."/>
            <person name="Hullo M.-F."/>
            <person name="Itaya M."/>
            <person name="Jones L.-M."/>
            <person name="Joris B."/>
            <person name="Karamata D."/>
            <person name="Kasahara Y."/>
            <person name="Klaerr-Blanchard M."/>
            <person name="Klein C."/>
            <person name="Kobayashi Y."/>
            <person name="Koetter P."/>
            <person name="Koningstein G."/>
            <person name="Krogh S."/>
            <person name="Kumano M."/>
            <person name="Kurita K."/>
            <person name="Lapidus A."/>
            <person name="Lardinois S."/>
            <person name="Lauber J."/>
            <person name="Lazarevic V."/>
            <person name="Lee S.-M."/>
            <person name="Levine A."/>
            <person name="Liu H."/>
            <person name="Masuda S."/>
            <person name="Mauel C."/>
            <person name="Medigue C."/>
            <person name="Medina N."/>
            <person name="Mellado R.P."/>
            <person name="Mizuno M."/>
            <person name="Moestl D."/>
            <person name="Nakai S."/>
            <person name="Noback M."/>
            <person name="Noone D."/>
            <person name="O'Reilly M."/>
            <person name="Ogawa K."/>
            <person name="Ogiwara A."/>
            <person name="Oudega B."/>
            <person name="Park S.-H."/>
            <person name="Parro V."/>
            <person name="Pohl T.M."/>
            <person name="Portetelle D."/>
            <person name="Porwollik S."/>
            <person name="Prescott A.M."/>
            <person name="Presecan E."/>
            <person name="Pujic P."/>
            <person name="Purnelle B."/>
            <person name="Rapoport G."/>
            <person name="Rey M."/>
            <person name="Reynolds S."/>
            <person name="Rieger M."/>
            <person name="Rivolta C."/>
            <person name="Rocha E."/>
            <person name="Roche B."/>
            <person name="Rose M."/>
            <person name="Sadaie Y."/>
            <person name="Sato T."/>
            <person name="Scanlan E."/>
            <person name="Schleich S."/>
            <person name="Schroeter R."/>
            <person name="Scoffone F."/>
            <person name="Sekiguchi J."/>
            <person name="Sekowska A."/>
            <person name="Seror S.J."/>
            <person name="Serror P."/>
            <person name="Shin B.-S."/>
            <person name="Soldo B."/>
            <person name="Sorokin A."/>
            <person name="Tacconi E."/>
            <person name="Takagi T."/>
            <person name="Takahashi H."/>
            <person name="Takemaru K."/>
            <person name="Takeuchi M."/>
            <person name="Tamakoshi A."/>
            <person name="Tanaka T."/>
            <person name="Terpstra P."/>
            <person name="Tognoni A."/>
            <person name="Tosato V."/>
            <person name="Uchiyama S."/>
            <person name="Vandenbol M."/>
            <person name="Vannier F."/>
            <person name="Vassarotti A."/>
            <person name="Viari A."/>
            <person name="Wambutt R."/>
            <person name="Wedler E."/>
            <person name="Wedler H."/>
            <person name="Weitzenegger T."/>
            <person name="Winters P."/>
            <person name="Wipat A."/>
            <person name="Yamamoto H."/>
            <person name="Yamane K."/>
            <person name="Yasumoto K."/>
            <person name="Yata K."/>
            <person name="Yoshida K."/>
            <person name="Yoshikawa H.-F."/>
            <person name="Zumstein E."/>
            <person name="Yoshikawa H."/>
            <person name="Danchin A."/>
        </authorList>
    </citation>
    <scope>NUCLEOTIDE SEQUENCE [LARGE SCALE GENOMIC DNA]</scope>
    <source>
        <strain>168</strain>
    </source>
</reference>
<proteinExistence type="inferred from homology"/>
<protein>
    <recommendedName>
        <fullName>Flagellar motor switch protein FliG</fullName>
    </recommendedName>
</protein>
<evidence type="ECO:0000250" key="1"/>
<evidence type="ECO:0000305" key="2"/>
<name>FLIG_BACSU</name>